<accession>A2C4X9</accession>
<reference key="1">
    <citation type="journal article" date="2007" name="PLoS Genet.">
        <title>Patterns and implications of gene gain and loss in the evolution of Prochlorococcus.</title>
        <authorList>
            <person name="Kettler G.C."/>
            <person name="Martiny A.C."/>
            <person name="Huang K."/>
            <person name="Zucker J."/>
            <person name="Coleman M.L."/>
            <person name="Rodrigue S."/>
            <person name="Chen F."/>
            <person name="Lapidus A."/>
            <person name="Ferriera S."/>
            <person name="Johnson J."/>
            <person name="Steglich C."/>
            <person name="Church G.M."/>
            <person name="Richardson P."/>
            <person name="Chisholm S.W."/>
        </authorList>
    </citation>
    <scope>NUCLEOTIDE SEQUENCE [LARGE SCALE GENOMIC DNA]</scope>
    <source>
        <strain>NATL1A</strain>
    </source>
</reference>
<gene>
    <name evidence="1" type="primary">rpsM</name>
    <name evidence="1" type="synonym">rps13</name>
    <name type="ordered locus">NATL1_19831</name>
</gene>
<name>RS13_PROM1</name>
<proteinExistence type="inferred from homology"/>
<dbReference type="EMBL" id="CP000553">
    <property type="protein sequence ID" value="ABM76539.1"/>
    <property type="molecule type" value="Genomic_DNA"/>
</dbReference>
<dbReference type="RefSeq" id="WP_011824501.1">
    <property type="nucleotide sequence ID" value="NC_008819.1"/>
</dbReference>
<dbReference type="SMR" id="A2C4X9"/>
<dbReference type="KEGG" id="pme:NATL1_19831"/>
<dbReference type="eggNOG" id="COG0099">
    <property type="taxonomic scope" value="Bacteria"/>
</dbReference>
<dbReference type="HOGENOM" id="CLU_103849_1_2_3"/>
<dbReference type="Proteomes" id="UP000002592">
    <property type="component" value="Chromosome"/>
</dbReference>
<dbReference type="GO" id="GO:0005829">
    <property type="term" value="C:cytosol"/>
    <property type="evidence" value="ECO:0007669"/>
    <property type="project" value="TreeGrafter"/>
</dbReference>
<dbReference type="GO" id="GO:0015935">
    <property type="term" value="C:small ribosomal subunit"/>
    <property type="evidence" value="ECO:0007669"/>
    <property type="project" value="TreeGrafter"/>
</dbReference>
<dbReference type="GO" id="GO:0019843">
    <property type="term" value="F:rRNA binding"/>
    <property type="evidence" value="ECO:0007669"/>
    <property type="project" value="UniProtKB-UniRule"/>
</dbReference>
<dbReference type="GO" id="GO:0003735">
    <property type="term" value="F:structural constituent of ribosome"/>
    <property type="evidence" value="ECO:0007669"/>
    <property type="project" value="InterPro"/>
</dbReference>
<dbReference type="GO" id="GO:0000049">
    <property type="term" value="F:tRNA binding"/>
    <property type="evidence" value="ECO:0007669"/>
    <property type="project" value="UniProtKB-UniRule"/>
</dbReference>
<dbReference type="GO" id="GO:0006412">
    <property type="term" value="P:translation"/>
    <property type="evidence" value="ECO:0007669"/>
    <property type="project" value="UniProtKB-UniRule"/>
</dbReference>
<dbReference type="FunFam" id="1.10.8.50:FF:000001">
    <property type="entry name" value="30S ribosomal protein S13"/>
    <property type="match status" value="1"/>
</dbReference>
<dbReference type="Gene3D" id="1.10.8.50">
    <property type="match status" value="1"/>
</dbReference>
<dbReference type="Gene3D" id="4.10.910.10">
    <property type="entry name" value="30s ribosomal protein s13, domain 2"/>
    <property type="match status" value="1"/>
</dbReference>
<dbReference type="HAMAP" id="MF_01315">
    <property type="entry name" value="Ribosomal_uS13"/>
    <property type="match status" value="1"/>
</dbReference>
<dbReference type="InterPro" id="IPR027437">
    <property type="entry name" value="Rbsml_uS13_C"/>
</dbReference>
<dbReference type="InterPro" id="IPR001892">
    <property type="entry name" value="Ribosomal_uS13"/>
</dbReference>
<dbReference type="InterPro" id="IPR010979">
    <property type="entry name" value="Ribosomal_uS13-like_H2TH"/>
</dbReference>
<dbReference type="InterPro" id="IPR019980">
    <property type="entry name" value="Ribosomal_uS13_bac-type"/>
</dbReference>
<dbReference type="InterPro" id="IPR018269">
    <property type="entry name" value="Ribosomal_uS13_CS"/>
</dbReference>
<dbReference type="NCBIfam" id="TIGR03631">
    <property type="entry name" value="uS13_bact"/>
    <property type="match status" value="1"/>
</dbReference>
<dbReference type="PANTHER" id="PTHR10871">
    <property type="entry name" value="30S RIBOSOMAL PROTEIN S13/40S RIBOSOMAL PROTEIN S18"/>
    <property type="match status" value="1"/>
</dbReference>
<dbReference type="PANTHER" id="PTHR10871:SF1">
    <property type="entry name" value="SMALL RIBOSOMAL SUBUNIT PROTEIN US13M"/>
    <property type="match status" value="1"/>
</dbReference>
<dbReference type="Pfam" id="PF00416">
    <property type="entry name" value="Ribosomal_S13"/>
    <property type="match status" value="1"/>
</dbReference>
<dbReference type="PIRSF" id="PIRSF002134">
    <property type="entry name" value="Ribosomal_S13"/>
    <property type="match status" value="1"/>
</dbReference>
<dbReference type="SUPFAM" id="SSF46946">
    <property type="entry name" value="S13-like H2TH domain"/>
    <property type="match status" value="1"/>
</dbReference>
<dbReference type="PROSITE" id="PS00646">
    <property type="entry name" value="RIBOSOMAL_S13_1"/>
    <property type="match status" value="1"/>
</dbReference>
<dbReference type="PROSITE" id="PS50159">
    <property type="entry name" value="RIBOSOMAL_S13_2"/>
    <property type="match status" value="1"/>
</dbReference>
<evidence type="ECO:0000255" key="1">
    <source>
        <dbReference type="HAMAP-Rule" id="MF_01315"/>
    </source>
</evidence>
<evidence type="ECO:0000256" key="2">
    <source>
        <dbReference type="SAM" id="MobiDB-lite"/>
    </source>
</evidence>
<evidence type="ECO:0000305" key="3"/>
<feature type="chain" id="PRO_0000306678" description="Small ribosomal subunit protein uS13">
    <location>
        <begin position="1"/>
        <end position="121"/>
    </location>
</feature>
<feature type="region of interest" description="Disordered" evidence="2">
    <location>
        <begin position="97"/>
        <end position="121"/>
    </location>
</feature>
<feature type="compositionally biased region" description="Basic residues" evidence="2">
    <location>
        <begin position="100"/>
        <end position="121"/>
    </location>
</feature>
<organism>
    <name type="scientific">Prochlorococcus marinus (strain NATL1A)</name>
    <dbReference type="NCBI Taxonomy" id="167555"/>
    <lineage>
        <taxon>Bacteria</taxon>
        <taxon>Bacillati</taxon>
        <taxon>Cyanobacteriota</taxon>
        <taxon>Cyanophyceae</taxon>
        <taxon>Synechococcales</taxon>
        <taxon>Prochlorococcaceae</taxon>
        <taxon>Prochlorococcus</taxon>
    </lineage>
</organism>
<comment type="function">
    <text evidence="1">Located at the top of the head of the 30S subunit, it contacts several helices of the 16S rRNA. In the 70S ribosome it contacts the 23S rRNA (bridge B1a) and protein L5 of the 50S subunit (bridge B1b), connecting the 2 subunits; these bridges are implicated in subunit movement. Contacts the tRNAs in the A and P-sites.</text>
</comment>
<comment type="subunit">
    <text evidence="1">Part of the 30S ribosomal subunit. Forms a loose heterodimer with protein S19. Forms two bridges to the 50S subunit in the 70S ribosome.</text>
</comment>
<comment type="similarity">
    <text evidence="1">Belongs to the universal ribosomal protein uS13 family.</text>
</comment>
<keyword id="KW-0687">Ribonucleoprotein</keyword>
<keyword id="KW-0689">Ribosomal protein</keyword>
<keyword id="KW-0694">RNA-binding</keyword>
<keyword id="KW-0699">rRNA-binding</keyword>
<keyword id="KW-0820">tRNA-binding</keyword>
<sequence>MARISGIDIPREKRVEVALTYIYGIGLTRAQAILEKSGVNPDIRVKDLDDGDIQKLRAVTEEFTLEGDLRRQEGMALKRLQDIGCVRGRRHRMSLPVRGQRTRTNARTRRGARKTVAGRKK</sequence>
<protein>
    <recommendedName>
        <fullName evidence="1">Small ribosomal subunit protein uS13</fullName>
    </recommendedName>
    <alternativeName>
        <fullName evidence="3">30S ribosomal protein S13</fullName>
    </alternativeName>
</protein>